<protein>
    <recommendedName>
        <fullName>Probable holin</fullName>
    </recommendedName>
    <alternativeName>
        <fullName>Lysis protein</fullName>
    </alternativeName>
</protein>
<feature type="chain" id="PRO_0000172858" description="Probable holin">
    <location>
        <begin position="1"/>
        <end position="135"/>
    </location>
</feature>
<feature type="transmembrane region" description="Helical" evidence="2">
    <location>
        <begin position="24"/>
        <end position="41"/>
    </location>
</feature>
<feature type="transmembrane region" description="Helical" evidence="2">
    <location>
        <begin position="62"/>
        <end position="84"/>
    </location>
</feature>
<evidence type="ECO:0000250" key="1"/>
<evidence type="ECO:0000255" key="2"/>
<evidence type="ECO:0000305" key="3"/>
<reference key="1">
    <citation type="submission" date="1998-07" db="EMBL/GenBank/DDBJ databases">
        <title>Complete nucleotide sequence of Bacillus subtilis phage phi-105.</title>
        <authorList>
            <person name="Kobayashi K."/>
            <person name="Okamura K."/>
            <person name="Inoue T."/>
            <person name="Sato T."/>
            <person name="Kobayashi Y."/>
        </authorList>
    </citation>
    <scope>NUCLEOTIDE SEQUENCE [GENOMIC DNA]</scope>
</reference>
<accession>Q9ZXD8</accession>
<dbReference type="EMBL" id="AB016282">
    <property type="protein sequence ID" value="BAA36651.1"/>
    <property type="molecule type" value="Genomic_DNA"/>
</dbReference>
<dbReference type="PIR" id="T13534">
    <property type="entry name" value="T13534"/>
</dbReference>
<dbReference type="RefSeq" id="NP_690778.1">
    <property type="nucleotide sequence ID" value="NC_004167.1"/>
</dbReference>
<dbReference type="SMR" id="Q9ZXD8"/>
<dbReference type="KEGG" id="vg:955202"/>
<dbReference type="OrthoDB" id="15393at10239"/>
<dbReference type="Proteomes" id="UP000008338">
    <property type="component" value="Genome"/>
</dbReference>
<dbReference type="GO" id="GO:0033644">
    <property type="term" value="C:host cell membrane"/>
    <property type="evidence" value="ECO:0007669"/>
    <property type="project" value="UniProtKB-SubCell"/>
</dbReference>
<dbReference type="GO" id="GO:0016020">
    <property type="term" value="C:membrane"/>
    <property type="evidence" value="ECO:0007669"/>
    <property type="project" value="UniProtKB-KW"/>
</dbReference>
<dbReference type="GO" id="GO:0031640">
    <property type="term" value="P:killing of cells of another organism"/>
    <property type="evidence" value="ECO:0007669"/>
    <property type="project" value="UniProtKB-KW"/>
</dbReference>
<dbReference type="InterPro" id="IPR006480">
    <property type="entry name" value="Phage_holin_4_1"/>
</dbReference>
<dbReference type="NCBIfam" id="TIGR01593">
    <property type="entry name" value="holin_tox_secr"/>
    <property type="match status" value="1"/>
</dbReference>
<dbReference type="Pfam" id="PF05105">
    <property type="entry name" value="Phage_holin_4_1"/>
    <property type="match status" value="1"/>
</dbReference>
<comment type="function">
    <text evidence="1">Produces a lesion in the cytoplasmic membrane allowing the phage lysosyme to attack the peptidoglycan.</text>
</comment>
<comment type="subcellular location">
    <subcellularLocation>
        <location evidence="3">Host membrane</location>
        <topology evidence="3">Multi-pass membrane protein</topology>
    </subcellularLocation>
</comment>
<comment type="similarity">
    <text evidence="3">Belongs to the bacteriophage holin family. Cp-1 holin subfamily.</text>
</comment>
<keyword id="KW-0204">Cytolysis</keyword>
<keyword id="KW-0578">Host cell lysis by virus</keyword>
<keyword id="KW-1043">Host membrane</keyword>
<keyword id="KW-0472">Membrane</keyword>
<keyword id="KW-1185">Reference proteome</keyword>
<keyword id="KW-0812">Transmembrane</keyword>
<keyword id="KW-1133">Transmembrane helix</keyword>
<keyword id="KW-1188">Viral release from host cell</keyword>
<organism>
    <name type="scientific">Bacillus phage phi105</name>
    <name type="common">Bacteriophage phi-105</name>
    <dbReference type="NCBI Taxonomy" id="10717"/>
    <lineage>
        <taxon>Viruses</taxon>
        <taxon>Duplodnaviria</taxon>
        <taxon>Heunggongvirae</taxon>
        <taxon>Uroviricota</taxon>
        <taxon>Caudoviricetes</taxon>
        <taxon>Spizizenvirus</taxon>
        <taxon>Spizizenvirus sv105</taxon>
    </lineage>
</organism>
<gene>
    <name type="primary">45</name>
</gene>
<sequence length="135" mass="15274">MWMNFESLQIARAYLFGEVKYLDLMLVLNIIDIITGVIKAWKFKELRSRSAWFGYVRKMLSFLVVIVANAIDTIMDLNGVLTFATVLFYIANEGLSITENLAQIGVKIPAVITDRLHVIESDNDQKTEKDDQAAG</sequence>
<organismHost>
    <name type="scientific">Bacillus subtilis</name>
    <dbReference type="NCBI Taxonomy" id="1423"/>
</organismHost>
<proteinExistence type="inferred from homology"/>
<name>VLYS_BPPH1</name>